<gene>
    <name evidence="1" type="primary">bshC</name>
    <name type="ordered locus">SAV1177</name>
</gene>
<comment type="function">
    <text evidence="1">Involved in bacillithiol (BSH) biosynthesis. May catalyze the last step of the pathway, the addition of cysteine to glucosamine malate (GlcN-Mal) to generate BSH.</text>
</comment>
<comment type="similarity">
    <text evidence="1">Belongs to the BshC family.</text>
</comment>
<dbReference type="EC" id="6.-.-.-" evidence="1"/>
<dbReference type="EMBL" id="BA000017">
    <property type="protein sequence ID" value="BAB57339.1"/>
    <property type="molecule type" value="Genomic_DNA"/>
</dbReference>
<dbReference type="RefSeq" id="WP_000340465.1">
    <property type="nucleotide sequence ID" value="NC_002758.2"/>
</dbReference>
<dbReference type="SMR" id="Q99UT3"/>
<dbReference type="KEGG" id="sav:SAV1177"/>
<dbReference type="HOGENOM" id="CLU_022249_0_0_9"/>
<dbReference type="PhylomeDB" id="Q99UT3"/>
<dbReference type="Proteomes" id="UP000002481">
    <property type="component" value="Chromosome"/>
</dbReference>
<dbReference type="GO" id="GO:0016874">
    <property type="term" value="F:ligase activity"/>
    <property type="evidence" value="ECO:0007669"/>
    <property type="project" value="UniProtKB-UniRule"/>
</dbReference>
<dbReference type="HAMAP" id="MF_01867">
    <property type="entry name" value="BshC"/>
    <property type="match status" value="1"/>
</dbReference>
<dbReference type="InterPro" id="IPR011199">
    <property type="entry name" value="Bacillithiol_biosynth_BshC"/>
</dbReference>
<dbReference type="InterPro" id="IPR055399">
    <property type="entry name" value="CC_BshC"/>
</dbReference>
<dbReference type="InterPro" id="IPR055398">
    <property type="entry name" value="Rossmann-like_BshC"/>
</dbReference>
<dbReference type="NCBIfam" id="TIGR03998">
    <property type="entry name" value="thiol_BshC"/>
    <property type="match status" value="1"/>
</dbReference>
<dbReference type="Pfam" id="PF24850">
    <property type="entry name" value="CC_BshC"/>
    <property type="match status" value="1"/>
</dbReference>
<dbReference type="Pfam" id="PF10079">
    <property type="entry name" value="Rossmann-like_BshC"/>
    <property type="match status" value="1"/>
</dbReference>
<dbReference type="PIRSF" id="PIRSF012535">
    <property type="entry name" value="UCP012535"/>
    <property type="match status" value="1"/>
</dbReference>
<accession>Q99UT3</accession>
<sequence length="537" mass="62834">MDCKVVSLNEKDQFIPKIKSSDPVITGLFQYDAAQQTSFEKRMSKENNGREAALANVIREYMSDLKLSNEQELNIQHLANGSKVVIGGQQAGLFGGPLYTFHKIFSIITLSKELTDTHKQQVVPVFWIAGEDHDFDEVNHTFVYNENHGSLHKVKYHTMEMPETTVSRYYPDKAELKQTLKTMFIHMKETVHTQGLLEICDRIIDQYDSWTDMFKALLHETFKAYGVLFIDAQFEPLRKMEAPMFKKILKKHQLLDDAFRATQQRTQNQGLNAMIQTDTNVHLFLHDENMRQLVSYDGKHFKLNKTDKTYIKEEIINIAENQPELFSNNVVTRPLMEEWLFNTVAFVGGPSEIKYWAELKDVFELFDVEMPIVMPRLRITYLNDRIEKLLSKYNIPLEKVLVDGVEGERSKFIREQASHQFIEKVEGMIEQQRRLNKDLLDEVAGNQNNINLVNKNNEIHIQQYDYLLKRYLLNIERENDISMKQFREIQETLHPMGGLQERIWNPLQILNDFGTDVFKPSTYPPLSYTFDHIIIKP</sequence>
<name>BSHC_STAAM</name>
<keyword id="KW-0175">Coiled coil</keyword>
<keyword id="KW-0436">Ligase</keyword>
<organism>
    <name type="scientific">Staphylococcus aureus (strain Mu50 / ATCC 700699)</name>
    <dbReference type="NCBI Taxonomy" id="158878"/>
    <lineage>
        <taxon>Bacteria</taxon>
        <taxon>Bacillati</taxon>
        <taxon>Bacillota</taxon>
        <taxon>Bacilli</taxon>
        <taxon>Bacillales</taxon>
        <taxon>Staphylococcaceae</taxon>
        <taxon>Staphylococcus</taxon>
    </lineage>
</organism>
<protein>
    <recommendedName>
        <fullName evidence="1">Putative cysteine ligase BshC</fullName>
        <ecNumber evidence="1">6.-.-.-</ecNumber>
    </recommendedName>
</protein>
<evidence type="ECO:0000255" key="1">
    <source>
        <dbReference type="HAMAP-Rule" id="MF_01867"/>
    </source>
</evidence>
<feature type="chain" id="PRO_0000378259" description="Putative cysteine ligase BshC">
    <location>
        <begin position="1"/>
        <end position="537"/>
    </location>
</feature>
<feature type="coiled-coil region" evidence="1">
    <location>
        <begin position="422"/>
        <end position="450"/>
    </location>
</feature>
<proteinExistence type="inferred from homology"/>
<reference key="1">
    <citation type="journal article" date="2001" name="Lancet">
        <title>Whole genome sequencing of meticillin-resistant Staphylococcus aureus.</title>
        <authorList>
            <person name="Kuroda M."/>
            <person name="Ohta T."/>
            <person name="Uchiyama I."/>
            <person name="Baba T."/>
            <person name="Yuzawa H."/>
            <person name="Kobayashi I."/>
            <person name="Cui L."/>
            <person name="Oguchi A."/>
            <person name="Aoki K."/>
            <person name="Nagai Y."/>
            <person name="Lian J.-Q."/>
            <person name="Ito T."/>
            <person name="Kanamori M."/>
            <person name="Matsumaru H."/>
            <person name="Maruyama A."/>
            <person name="Murakami H."/>
            <person name="Hosoyama A."/>
            <person name="Mizutani-Ui Y."/>
            <person name="Takahashi N.K."/>
            <person name="Sawano T."/>
            <person name="Inoue R."/>
            <person name="Kaito C."/>
            <person name="Sekimizu K."/>
            <person name="Hirakawa H."/>
            <person name="Kuhara S."/>
            <person name="Goto S."/>
            <person name="Yabuzaki J."/>
            <person name="Kanehisa M."/>
            <person name="Yamashita A."/>
            <person name="Oshima K."/>
            <person name="Furuya K."/>
            <person name="Yoshino C."/>
            <person name="Shiba T."/>
            <person name="Hattori M."/>
            <person name="Ogasawara N."/>
            <person name="Hayashi H."/>
            <person name="Hiramatsu K."/>
        </authorList>
    </citation>
    <scope>NUCLEOTIDE SEQUENCE [LARGE SCALE GENOMIC DNA]</scope>
    <source>
        <strain>Mu50 / ATCC 700699</strain>
    </source>
</reference>